<keyword id="KW-1185">Reference proteome</keyword>
<keyword id="KW-0687">Ribonucleoprotein</keyword>
<keyword id="KW-0689">Ribosomal protein</keyword>
<evidence type="ECO:0000256" key="1">
    <source>
        <dbReference type="SAM" id="MobiDB-lite"/>
    </source>
</evidence>
<evidence type="ECO:0000305" key="2"/>
<name>RL34_XYLFT</name>
<sequence length="46" mass="5399">MATKRTYQPSNLKRKRDHGFRARMSTADGRKILARRRAKGRKRLSA</sequence>
<protein>
    <recommendedName>
        <fullName evidence="2">Large ribosomal subunit protein bL34</fullName>
    </recommendedName>
    <alternativeName>
        <fullName>50S ribosomal protein L34</fullName>
    </alternativeName>
</protein>
<gene>
    <name type="primary">rpmH</name>
    <name type="ordered locus">PD_2123</name>
</gene>
<accession>P66264</accession>
<accession>Q9P9T9</accession>
<reference key="1">
    <citation type="journal article" date="2003" name="J. Bacteriol.">
        <title>Comparative analyses of the complete genome sequences of Pierce's disease and citrus variegated chlorosis strains of Xylella fastidiosa.</title>
        <authorList>
            <person name="Van Sluys M.A."/>
            <person name="de Oliveira M.C."/>
            <person name="Monteiro-Vitorello C.B."/>
            <person name="Miyaki C.Y."/>
            <person name="Furlan L.R."/>
            <person name="Camargo L.E.A."/>
            <person name="da Silva A.C.R."/>
            <person name="Moon D.H."/>
            <person name="Takita M.A."/>
            <person name="Lemos E.G.M."/>
            <person name="Machado M.A."/>
            <person name="Ferro M.I.T."/>
            <person name="da Silva F.R."/>
            <person name="Goldman M.H.S."/>
            <person name="Goldman G.H."/>
            <person name="Lemos M.V.F."/>
            <person name="El-Dorry H."/>
            <person name="Tsai S.M."/>
            <person name="Carrer H."/>
            <person name="Carraro D.M."/>
            <person name="de Oliveira R.C."/>
            <person name="Nunes L.R."/>
            <person name="Siqueira W.J."/>
            <person name="Coutinho L.L."/>
            <person name="Kimura E.T."/>
            <person name="Ferro E.S."/>
            <person name="Harakava R."/>
            <person name="Kuramae E.E."/>
            <person name="Marino C.L."/>
            <person name="Giglioti E."/>
            <person name="Abreu I.L."/>
            <person name="Alves L.M.C."/>
            <person name="do Amaral A.M."/>
            <person name="Baia G.S."/>
            <person name="Blanco S.R."/>
            <person name="Brito M.S."/>
            <person name="Cannavan F.S."/>
            <person name="Celestino A.V."/>
            <person name="da Cunha A.F."/>
            <person name="Fenille R.C."/>
            <person name="Ferro J.A."/>
            <person name="Formighieri E.F."/>
            <person name="Kishi L.T."/>
            <person name="Leoni S.G."/>
            <person name="Oliveira A.R."/>
            <person name="Rosa V.E. Jr."/>
            <person name="Sassaki F.T."/>
            <person name="Sena J.A.D."/>
            <person name="de Souza A.A."/>
            <person name="Truffi D."/>
            <person name="Tsukumo F."/>
            <person name="Yanai G.M."/>
            <person name="Zaros L.G."/>
            <person name="Civerolo E.L."/>
            <person name="Simpson A.J.G."/>
            <person name="Almeida N.F. Jr."/>
            <person name="Setubal J.C."/>
            <person name="Kitajima J.P."/>
        </authorList>
    </citation>
    <scope>NUCLEOTIDE SEQUENCE [LARGE SCALE GENOMIC DNA]</scope>
    <source>
        <strain>Temecula1 / ATCC 700964</strain>
    </source>
</reference>
<proteinExistence type="inferred from homology"/>
<dbReference type="EMBL" id="AE009442">
    <property type="protein sequence ID" value="AAO29942.1"/>
    <property type="molecule type" value="Genomic_DNA"/>
</dbReference>
<dbReference type="RefSeq" id="WP_004085093.1">
    <property type="nucleotide sequence ID" value="NC_004556.1"/>
</dbReference>
<dbReference type="SMR" id="P66264"/>
<dbReference type="GeneID" id="93905998"/>
<dbReference type="KEGG" id="xft:PD_2123"/>
<dbReference type="HOGENOM" id="CLU_129938_2_0_6"/>
<dbReference type="Proteomes" id="UP000002516">
    <property type="component" value="Chromosome"/>
</dbReference>
<dbReference type="GO" id="GO:1990904">
    <property type="term" value="C:ribonucleoprotein complex"/>
    <property type="evidence" value="ECO:0007669"/>
    <property type="project" value="UniProtKB-KW"/>
</dbReference>
<dbReference type="GO" id="GO:0005840">
    <property type="term" value="C:ribosome"/>
    <property type="evidence" value="ECO:0007669"/>
    <property type="project" value="UniProtKB-KW"/>
</dbReference>
<dbReference type="GO" id="GO:0003735">
    <property type="term" value="F:structural constituent of ribosome"/>
    <property type="evidence" value="ECO:0007669"/>
    <property type="project" value="InterPro"/>
</dbReference>
<dbReference type="GO" id="GO:0006412">
    <property type="term" value="P:translation"/>
    <property type="evidence" value="ECO:0007669"/>
    <property type="project" value="UniProtKB-UniRule"/>
</dbReference>
<dbReference type="FunFam" id="1.10.287.3980:FF:000001">
    <property type="entry name" value="Mitochondrial ribosomal protein L34"/>
    <property type="match status" value="1"/>
</dbReference>
<dbReference type="Gene3D" id="1.10.287.3980">
    <property type="match status" value="1"/>
</dbReference>
<dbReference type="HAMAP" id="MF_00391">
    <property type="entry name" value="Ribosomal_bL34"/>
    <property type="match status" value="1"/>
</dbReference>
<dbReference type="InterPro" id="IPR000271">
    <property type="entry name" value="Ribosomal_bL34"/>
</dbReference>
<dbReference type="InterPro" id="IPR020939">
    <property type="entry name" value="Ribosomal_bL34_CS"/>
</dbReference>
<dbReference type="NCBIfam" id="TIGR01030">
    <property type="entry name" value="rpmH_bact"/>
    <property type="match status" value="1"/>
</dbReference>
<dbReference type="PANTHER" id="PTHR14503:SF4">
    <property type="entry name" value="LARGE RIBOSOMAL SUBUNIT PROTEIN BL34M"/>
    <property type="match status" value="1"/>
</dbReference>
<dbReference type="PANTHER" id="PTHR14503">
    <property type="entry name" value="MITOCHONDRIAL RIBOSOMAL PROTEIN 34 FAMILY MEMBER"/>
    <property type="match status" value="1"/>
</dbReference>
<dbReference type="Pfam" id="PF00468">
    <property type="entry name" value="Ribosomal_L34"/>
    <property type="match status" value="1"/>
</dbReference>
<dbReference type="PROSITE" id="PS00784">
    <property type="entry name" value="RIBOSOMAL_L34"/>
    <property type="match status" value="1"/>
</dbReference>
<organism>
    <name type="scientific">Xylella fastidiosa (strain Temecula1 / ATCC 700964)</name>
    <dbReference type="NCBI Taxonomy" id="183190"/>
    <lineage>
        <taxon>Bacteria</taxon>
        <taxon>Pseudomonadati</taxon>
        <taxon>Pseudomonadota</taxon>
        <taxon>Gammaproteobacteria</taxon>
        <taxon>Lysobacterales</taxon>
        <taxon>Lysobacteraceae</taxon>
        <taxon>Xylella</taxon>
    </lineage>
</organism>
<comment type="similarity">
    <text evidence="2">Belongs to the bacterial ribosomal protein bL34 family.</text>
</comment>
<feature type="chain" id="PRO_0000187510" description="Large ribosomal subunit protein bL34">
    <location>
        <begin position="1"/>
        <end position="46"/>
    </location>
</feature>
<feature type="region of interest" description="Disordered" evidence="1">
    <location>
        <begin position="1"/>
        <end position="46"/>
    </location>
</feature>
<feature type="compositionally biased region" description="Polar residues" evidence="1">
    <location>
        <begin position="1"/>
        <end position="11"/>
    </location>
</feature>
<feature type="compositionally biased region" description="Basic residues" evidence="1">
    <location>
        <begin position="32"/>
        <end position="46"/>
    </location>
</feature>